<organism>
    <name type="scientific">Corynebacterium aurimucosum (strain ATCC 700975 / DSM 44827 / CIP 107346 / CN-1)</name>
    <name type="common">Corynebacterium nigricans</name>
    <dbReference type="NCBI Taxonomy" id="548476"/>
    <lineage>
        <taxon>Bacteria</taxon>
        <taxon>Bacillati</taxon>
        <taxon>Actinomycetota</taxon>
        <taxon>Actinomycetes</taxon>
        <taxon>Mycobacteriales</taxon>
        <taxon>Corynebacteriaceae</taxon>
        <taxon>Corynebacterium</taxon>
    </lineage>
</organism>
<feature type="chain" id="PRO_0000381879" description="Polyribonucleotide nucleotidyltransferase">
    <location>
        <begin position="1"/>
        <end position="756"/>
    </location>
</feature>
<feature type="domain" description="KH" evidence="1">
    <location>
        <begin position="613"/>
        <end position="672"/>
    </location>
</feature>
<feature type="domain" description="S1 motif" evidence="1">
    <location>
        <begin position="684"/>
        <end position="753"/>
    </location>
</feature>
<feature type="binding site" evidence="1">
    <location>
        <position position="547"/>
    </location>
    <ligand>
        <name>Mg(2+)</name>
        <dbReference type="ChEBI" id="CHEBI:18420"/>
    </ligand>
</feature>
<feature type="binding site" evidence="1">
    <location>
        <position position="553"/>
    </location>
    <ligand>
        <name>Mg(2+)</name>
        <dbReference type="ChEBI" id="CHEBI:18420"/>
    </ligand>
</feature>
<sequence>MSAKNAKKQPNNSVEFLIDDDYGITEAIATLDNGDFGTRTIRFETGQLARQAGGSVTTYLDEDTMLLSTTTASNQPREGFDFFPLTVDVEERMYAAGKIPGSFFRREGRPSTEAILACRLIDRPLRPTFVKGLRNEVQVVVTVLSMDPEEYYDVVAINGASASTQLSGLPVSGPVGGVRMALIADDKHPKGQWVAFPNNEQHERALFEMVVAGRIVKKGRKDDVAIMMVEAGAGVNVAERIKEGAPAPQESTVAEGLEAAKPFIKSLCEAQAGLAERAAKETQEFPLFPPYGDDVYAAVEKAASKKLEKLLTIPGKQDRDDATNEYMEQVEAKLIEDFDDLDEADASKQIRNAFNAVMKDIVRTKILTEGFRIDGRGVTDIRDLGVEVDLIPRAHGSSLFERGETQILGVTTLDMLKMEQQIDSLTPVESKRYMHHYNFPPYSTGETGRVGSPKRREIGHGALAERALLPVIPSREDFPYAIRQVSEALGSNGSTSMGSVCASTLSLYNAGVPLKAPVAGIAMGLVSGEVNGKEKFVALTDILGAEDAFGDMDFKVAGTSEFITALQLDTKLDGIPSHVLADALEQARDARAAILDTMSEVIESPDEMSGLAPRITSVTIPVNKIGELIGPKGKTINAITEETGADVSIEEDGTVYISAATGEAADAAIDRVNSIANPQLPKVGERFLGTVVKTVAFGAFVSLTPGRDGLVHISKLGGDERIEKVEDVVNVGDKIQVEIADIDNRGKISLVPVEED</sequence>
<evidence type="ECO:0000255" key="1">
    <source>
        <dbReference type="HAMAP-Rule" id="MF_01595"/>
    </source>
</evidence>
<protein>
    <recommendedName>
        <fullName evidence="1">Polyribonucleotide nucleotidyltransferase</fullName>
        <ecNumber evidence="1">2.7.7.8</ecNumber>
    </recommendedName>
    <alternativeName>
        <fullName evidence="1">Polynucleotide phosphorylase</fullName>
        <shortName evidence="1">PNPase</shortName>
    </alternativeName>
</protein>
<reference key="1">
    <citation type="journal article" date="2010" name="BMC Genomics">
        <title>Complete genome sequence and lifestyle of black-pigmented Corynebacterium aurimucosum ATCC 700975 (formerly C. nigricans CN-1) isolated from a vaginal swab of a woman with spontaneous abortion.</title>
        <authorList>
            <person name="Trost E."/>
            <person name="Gotker S."/>
            <person name="Schneider J."/>
            <person name="Schneiker-Bekel S."/>
            <person name="Szczepanowski R."/>
            <person name="Tilker A."/>
            <person name="Viehoever P."/>
            <person name="Arnold W."/>
            <person name="Bekel T."/>
            <person name="Blom J."/>
            <person name="Gartemann K.H."/>
            <person name="Linke B."/>
            <person name="Goesmann A."/>
            <person name="Puhler A."/>
            <person name="Shukla S.K."/>
            <person name="Tauch A."/>
        </authorList>
    </citation>
    <scope>NUCLEOTIDE SEQUENCE [LARGE SCALE GENOMIC DNA]</scope>
    <source>
        <strain>ATCC 700975 / DSM 44827 / CIP 107346 / CN-1</strain>
    </source>
</reference>
<keyword id="KW-0963">Cytoplasm</keyword>
<keyword id="KW-0460">Magnesium</keyword>
<keyword id="KW-0479">Metal-binding</keyword>
<keyword id="KW-0548">Nucleotidyltransferase</keyword>
<keyword id="KW-1185">Reference proteome</keyword>
<keyword id="KW-0694">RNA-binding</keyword>
<keyword id="KW-0808">Transferase</keyword>
<dbReference type="EC" id="2.7.7.8" evidence="1"/>
<dbReference type="EMBL" id="CP001601">
    <property type="protein sequence ID" value="ACP33113.1"/>
    <property type="molecule type" value="Genomic_DNA"/>
</dbReference>
<dbReference type="RefSeq" id="WP_010190315.1">
    <property type="nucleotide sequence ID" value="NC_012590.1"/>
</dbReference>
<dbReference type="SMR" id="C3PH09"/>
<dbReference type="STRING" id="548476.cauri_1520"/>
<dbReference type="GeneID" id="31924150"/>
<dbReference type="KEGG" id="car:cauri_1520"/>
<dbReference type="eggNOG" id="COG1185">
    <property type="taxonomic scope" value="Bacteria"/>
</dbReference>
<dbReference type="HOGENOM" id="CLU_004217_2_2_11"/>
<dbReference type="OrthoDB" id="9804305at2"/>
<dbReference type="Proteomes" id="UP000002077">
    <property type="component" value="Chromosome"/>
</dbReference>
<dbReference type="GO" id="GO:0005829">
    <property type="term" value="C:cytosol"/>
    <property type="evidence" value="ECO:0007669"/>
    <property type="project" value="TreeGrafter"/>
</dbReference>
<dbReference type="GO" id="GO:0000175">
    <property type="term" value="F:3'-5'-RNA exonuclease activity"/>
    <property type="evidence" value="ECO:0007669"/>
    <property type="project" value="TreeGrafter"/>
</dbReference>
<dbReference type="GO" id="GO:0000287">
    <property type="term" value="F:magnesium ion binding"/>
    <property type="evidence" value="ECO:0007669"/>
    <property type="project" value="UniProtKB-UniRule"/>
</dbReference>
<dbReference type="GO" id="GO:0004654">
    <property type="term" value="F:polyribonucleotide nucleotidyltransferase activity"/>
    <property type="evidence" value="ECO:0007669"/>
    <property type="project" value="UniProtKB-UniRule"/>
</dbReference>
<dbReference type="GO" id="GO:0003723">
    <property type="term" value="F:RNA binding"/>
    <property type="evidence" value="ECO:0007669"/>
    <property type="project" value="UniProtKB-UniRule"/>
</dbReference>
<dbReference type="GO" id="GO:0006402">
    <property type="term" value="P:mRNA catabolic process"/>
    <property type="evidence" value="ECO:0007669"/>
    <property type="project" value="UniProtKB-UniRule"/>
</dbReference>
<dbReference type="GO" id="GO:0006396">
    <property type="term" value="P:RNA processing"/>
    <property type="evidence" value="ECO:0007669"/>
    <property type="project" value="InterPro"/>
</dbReference>
<dbReference type="CDD" id="cd02393">
    <property type="entry name" value="KH-I_PNPase"/>
    <property type="match status" value="1"/>
</dbReference>
<dbReference type="CDD" id="cd11364">
    <property type="entry name" value="RNase_PH_PNPase_2"/>
    <property type="match status" value="1"/>
</dbReference>
<dbReference type="CDD" id="cd04472">
    <property type="entry name" value="S1_PNPase"/>
    <property type="match status" value="1"/>
</dbReference>
<dbReference type="FunFam" id="2.40.50.140:FF:000069">
    <property type="entry name" value="Polyribonucleotide nucleotidyltransferase"/>
    <property type="match status" value="1"/>
</dbReference>
<dbReference type="FunFam" id="3.30.1370.10:FF:000001">
    <property type="entry name" value="Polyribonucleotide nucleotidyltransferase"/>
    <property type="match status" value="1"/>
</dbReference>
<dbReference type="FunFam" id="3.30.230.70:FF:000001">
    <property type="entry name" value="Polyribonucleotide nucleotidyltransferase"/>
    <property type="match status" value="1"/>
</dbReference>
<dbReference type="FunFam" id="3.30.230.70:FF:000002">
    <property type="entry name" value="Polyribonucleotide nucleotidyltransferase"/>
    <property type="match status" value="1"/>
</dbReference>
<dbReference type="Gene3D" id="3.30.230.70">
    <property type="entry name" value="GHMP Kinase, N-terminal domain"/>
    <property type="match status" value="2"/>
</dbReference>
<dbReference type="Gene3D" id="3.30.1370.10">
    <property type="entry name" value="K Homology domain, type 1"/>
    <property type="match status" value="1"/>
</dbReference>
<dbReference type="Gene3D" id="2.40.50.140">
    <property type="entry name" value="Nucleic acid-binding proteins"/>
    <property type="match status" value="1"/>
</dbReference>
<dbReference type="HAMAP" id="MF_01595">
    <property type="entry name" value="PNPase"/>
    <property type="match status" value="1"/>
</dbReference>
<dbReference type="InterPro" id="IPR001247">
    <property type="entry name" value="ExoRNase_PH_dom1"/>
</dbReference>
<dbReference type="InterPro" id="IPR036345">
    <property type="entry name" value="ExoRNase_PH_dom2_sf"/>
</dbReference>
<dbReference type="InterPro" id="IPR014069">
    <property type="entry name" value="GPSI/PNP"/>
</dbReference>
<dbReference type="InterPro" id="IPR004087">
    <property type="entry name" value="KH_dom"/>
</dbReference>
<dbReference type="InterPro" id="IPR004088">
    <property type="entry name" value="KH_dom_type_1"/>
</dbReference>
<dbReference type="InterPro" id="IPR036612">
    <property type="entry name" value="KH_dom_type_1_sf"/>
</dbReference>
<dbReference type="InterPro" id="IPR012340">
    <property type="entry name" value="NA-bd_OB-fold"/>
</dbReference>
<dbReference type="InterPro" id="IPR012162">
    <property type="entry name" value="PNPase"/>
</dbReference>
<dbReference type="InterPro" id="IPR027408">
    <property type="entry name" value="PNPase/RNase_PH_dom_sf"/>
</dbReference>
<dbReference type="InterPro" id="IPR015848">
    <property type="entry name" value="PNPase_PH_RNA-bd_bac/org-type"/>
</dbReference>
<dbReference type="InterPro" id="IPR036456">
    <property type="entry name" value="PNPase_PH_RNA-bd_sf"/>
</dbReference>
<dbReference type="InterPro" id="IPR020568">
    <property type="entry name" value="Ribosomal_Su5_D2-typ_SF"/>
</dbReference>
<dbReference type="InterPro" id="IPR003029">
    <property type="entry name" value="S1_domain"/>
</dbReference>
<dbReference type="NCBIfam" id="TIGR03591">
    <property type="entry name" value="polynuc_phos"/>
    <property type="match status" value="1"/>
</dbReference>
<dbReference type="NCBIfam" id="TIGR02696">
    <property type="entry name" value="pppGpp_PNP"/>
    <property type="match status" value="1"/>
</dbReference>
<dbReference type="NCBIfam" id="NF008805">
    <property type="entry name" value="PRK11824.1"/>
    <property type="match status" value="1"/>
</dbReference>
<dbReference type="PANTHER" id="PTHR11252">
    <property type="entry name" value="POLYRIBONUCLEOTIDE NUCLEOTIDYLTRANSFERASE"/>
    <property type="match status" value="1"/>
</dbReference>
<dbReference type="PANTHER" id="PTHR11252:SF0">
    <property type="entry name" value="POLYRIBONUCLEOTIDE NUCLEOTIDYLTRANSFERASE 1, MITOCHONDRIAL"/>
    <property type="match status" value="1"/>
</dbReference>
<dbReference type="Pfam" id="PF00013">
    <property type="entry name" value="KH_1"/>
    <property type="match status" value="1"/>
</dbReference>
<dbReference type="Pfam" id="PF03726">
    <property type="entry name" value="PNPase"/>
    <property type="match status" value="1"/>
</dbReference>
<dbReference type="Pfam" id="PF01138">
    <property type="entry name" value="RNase_PH"/>
    <property type="match status" value="2"/>
</dbReference>
<dbReference type="Pfam" id="PF00575">
    <property type="entry name" value="S1"/>
    <property type="match status" value="1"/>
</dbReference>
<dbReference type="PIRSF" id="PIRSF005499">
    <property type="entry name" value="PNPase"/>
    <property type="match status" value="1"/>
</dbReference>
<dbReference type="SMART" id="SM00322">
    <property type="entry name" value="KH"/>
    <property type="match status" value="1"/>
</dbReference>
<dbReference type="SMART" id="SM00316">
    <property type="entry name" value="S1"/>
    <property type="match status" value="1"/>
</dbReference>
<dbReference type="SUPFAM" id="SSF54791">
    <property type="entry name" value="Eukaryotic type KH-domain (KH-domain type I)"/>
    <property type="match status" value="1"/>
</dbReference>
<dbReference type="SUPFAM" id="SSF50249">
    <property type="entry name" value="Nucleic acid-binding proteins"/>
    <property type="match status" value="1"/>
</dbReference>
<dbReference type="SUPFAM" id="SSF46915">
    <property type="entry name" value="Polynucleotide phosphorylase/guanosine pentaphosphate synthase (PNPase/GPSI), domain 3"/>
    <property type="match status" value="1"/>
</dbReference>
<dbReference type="SUPFAM" id="SSF55666">
    <property type="entry name" value="Ribonuclease PH domain 2-like"/>
    <property type="match status" value="2"/>
</dbReference>
<dbReference type="SUPFAM" id="SSF54211">
    <property type="entry name" value="Ribosomal protein S5 domain 2-like"/>
    <property type="match status" value="2"/>
</dbReference>
<dbReference type="PROSITE" id="PS50084">
    <property type="entry name" value="KH_TYPE_1"/>
    <property type="match status" value="1"/>
</dbReference>
<dbReference type="PROSITE" id="PS50126">
    <property type="entry name" value="S1"/>
    <property type="match status" value="1"/>
</dbReference>
<gene>
    <name evidence="1" type="primary">pnp</name>
    <name type="ordered locus">cauri_1520</name>
</gene>
<comment type="function">
    <text evidence="1">Involved in mRNA degradation. Catalyzes the phosphorolysis of single-stranded polyribonucleotides processively in the 3'- to 5'-direction.</text>
</comment>
<comment type="catalytic activity">
    <reaction evidence="1">
        <text>RNA(n+1) + phosphate = RNA(n) + a ribonucleoside 5'-diphosphate</text>
        <dbReference type="Rhea" id="RHEA:22096"/>
        <dbReference type="Rhea" id="RHEA-COMP:14527"/>
        <dbReference type="Rhea" id="RHEA-COMP:17342"/>
        <dbReference type="ChEBI" id="CHEBI:43474"/>
        <dbReference type="ChEBI" id="CHEBI:57930"/>
        <dbReference type="ChEBI" id="CHEBI:140395"/>
        <dbReference type="EC" id="2.7.7.8"/>
    </reaction>
</comment>
<comment type="cofactor">
    <cofactor evidence="1">
        <name>Mg(2+)</name>
        <dbReference type="ChEBI" id="CHEBI:18420"/>
    </cofactor>
</comment>
<comment type="subcellular location">
    <subcellularLocation>
        <location evidence="1">Cytoplasm</location>
    </subcellularLocation>
</comment>
<comment type="similarity">
    <text evidence="1">Belongs to the polyribonucleotide nucleotidyltransferase family.</text>
</comment>
<name>PNP_CORA7</name>
<accession>C3PH09</accession>
<proteinExistence type="inferred from homology"/>